<evidence type="ECO:0000250" key="1">
    <source>
        <dbReference type="UniProtKB" id="A0A0D4WTV1"/>
    </source>
</evidence>
<evidence type="ECO:0000250" key="2">
    <source>
        <dbReference type="UniProtKB" id="A0A0D4WV12"/>
    </source>
</evidence>
<evidence type="ECO:0000250" key="3">
    <source>
        <dbReference type="UniProtKB" id="P0CE80"/>
    </source>
</evidence>
<evidence type="ECO:0000250" key="4">
    <source>
        <dbReference type="UniProtKB" id="Q4ZFU2"/>
    </source>
</evidence>
<evidence type="ECO:0000250" key="5">
    <source>
        <dbReference type="UniProtKB" id="Q8I914"/>
    </source>
</evidence>
<evidence type="ECO:0000303" key="6">
    <source>
    </source>
</evidence>
<evidence type="ECO:0000305" key="7"/>
<evidence type="ECO:0000305" key="8">
    <source>
    </source>
</evidence>
<feature type="chain" id="PRO_0000392823" description="Dermonecrotic toxin LvSicTox-alphaII1">
    <location>
        <begin position="1" status="less than"/>
        <end position="276"/>
    </location>
</feature>
<feature type="active site" evidence="5">
    <location>
        <position position="5"/>
    </location>
</feature>
<feature type="active site" description="Nucleophile" evidence="5">
    <location>
        <position position="41"/>
    </location>
</feature>
<feature type="binding site" evidence="5">
    <location>
        <position position="25"/>
    </location>
    <ligand>
        <name>Mg(2+)</name>
        <dbReference type="ChEBI" id="CHEBI:18420"/>
    </ligand>
</feature>
<feature type="binding site" evidence="5">
    <location>
        <position position="27"/>
    </location>
    <ligand>
        <name>Mg(2+)</name>
        <dbReference type="ChEBI" id="CHEBI:18420"/>
    </ligand>
</feature>
<feature type="binding site" evidence="5">
    <location>
        <position position="85"/>
    </location>
    <ligand>
        <name>Mg(2+)</name>
        <dbReference type="ChEBI" id="CHEBI:18420"/>
    </ligand>
</feature>
<feature type="disulfide bond" evidence="3">
    <location>
        <begin position="45"/>
        <end position="51"/>
    </location>
</feature>
<feature type="disulfide bond" evidence="3">
    <location>
        <begin position="47"/>
        <end position="193"/>
    </location>
</feature>
<feature type="non-terminal residue">
    <location>
        <position position="1"/>
    </location>
</feature>
<keyword id="KW-0204">Cytolysis</keyword>
<keyword id="KW-1061">Dermonecrotic toxin</keyword>
<keyword id="KW-1015">Disulfide bond</keyword>
<keyword id="KW-0354">Hemolysis</keyword>
<keyword id="KW-0442">Lipid degradation</keyword>
<keyword id="KW-0443">Lipid metabolism</keyword>
<keyword id="KW-0456">Lyase</keyword>
<keyword id="KW-0460">Magnesium</keyword>
<keyword id="KW-0479">Metal-binding</keyword>
<keyword id="KW-0964">Secreted</keyword>
<keyword id="KW-0800">Toxin</keyword>
<reference key="1">
    <citation type="journal article" date="2009" name="Mol. Biol. Evol.">
        <title>Molecular evolution, functional variation, and proposed nomenclature of the gene family that includes sphingomyelinase D in sicariid spider venoms.</title>
        <authorList>
            <person name="Binford G.J."/>
            <person name="Bodner M.R."/>
            <person name="Cordes M.H."/>
            <person name="Baldwin K.L."/>
            <person name="Rynerson M.R."/>
            <person name="Burns S.N."/>
            <person name="Zobel-Thropp P.A."/>
        </authorList>
    </citation>
    <scope>NUCLEOTIDE SEQUENCE [MRNA]</scope>
    <scope>NOMENCLATURE</scope>
    <source>
        <tissue>Venom gland</tissue>
    </source>
</reference>
<comment type="function">
    <text evidence="1 3">Dermonecrotic toxins cleave the phosphodiester linkage between the phosphate and headgroup of certain phospholipids (sphingolipid and lysolipid substrates), forming an alcohol (often choline) and a cyclic phosphate (By similarity). This toxin acts on sphingomyelin (SM) (By similarity). It may also act on ceramide phosphoethanolamine (CPE), lysophosphatidylcholine (LPC) and lysophosphatidylethanolamine (LPE), but not on lysophosphatidylserine (LPS), and lysophosphatidylglycerol (LPG) (By similarity). It acts by transphosphatidylation, releasing exclusively cyclic phosphate products as second products (By similarity). Induces dermonecrosis, hemolysis, increased vascular permeability, edema, inflammatory response, and platelet aggregation (By similarity).</text>
</comment>
<comment type="catalytic activity">
    <reaction evidence="1">
        <text>an N-(acyl)-sphingosylphosphocholine = an N-(acyl)-sphingosyl-1,3-cyclic phosphate + choline</text>
        <dbReference type="Rhea" id="RHEA:60652"/>
        <dbReference type="ChEBI" id="CHEBI:15354"/>
        <dbReference type="ChEBI" id="CHEBI:64583"/>
        <dbReference type="ChEBI" id="CHEBI:143892"/>
    </reaction>
</comment>
<comment type="catalytic activity">
    <reaction evidence="1">
        <text>an N-(acyl)-sphingosylphosphoethanolamine = an N-(acyl)-sphingosyl-1,3-cyclic phosphate + ethanolamine</text>
        <dbReference type="Rhea" id="RHEA:60648"/>
        <dbReference type="ChEBI" id="CHEBI:57603"/>
        <dbReference type="ChEBI" id="CHEBI:143891"/>
        <dbReference type="ChEBI" id="CHEBI:143892"/>
    </reaction>
</comment>
<comment type="catalytic activity">
    <reaction evidence="1">
        <text>a 1-acyl-sn-glycero-3-phosphocholine = a 1-acyl-sn-glycero-2,3-cyclic phosphate + choline</text>
        <dbReference type="Rhea" id="RHEA:60700"/>
        <dbReference type="ChEBI" id="CHEBI:15354"/>
        <dbReference type="ChEBI" id="CHEBI:58168"/>
        <dbReference type="ChEBI" id="CHEBI:143947"/>
    </reaction>
</comment>
<comment type="catalytic activity">
    <reaction evidence="1">
        <text>a 1-acyl-sn-glycero-3-phosphoethanolamine = a 1-acyl-sn-glycero-2,3-cyclic phosphate + ethanolamine</text>
        <dbReference type="Rhea" id="RHEA:60704"/>
        <dbReference type="ChEBI" id="CHEBI:57603"/>
        <dbReference type="ChEBI" id="CHEBI:64381"/>
        <dbReference type="ChEBI" id="CHEBI:143947"/>
    </reaction>
</comment>
<comment type="cofactor">
    <cofactor evidence="5">
        <name>Mg(2+)</name>
        <dbReference type="ChEBI" id="CHEBI:18420"/>
    </cofactor>
    <text evidence="5">Binds 1 Mg(2+) ion per subunit.</text>
</comment>
<comment type="subcellular location">
    <subcellularLocation>
        <location evidence="8">Secreted</location>
    </subcellularLocation>
</comment>
<comment type="tissue specificity">
    <text evidence="8">Expressed by the venom gland.</text>
</comment>
<comment type="similarity">
    <text evidence="7">Belongs to the arthropod phospholipase D family. Class II subfamily.</text>
</comment>
<comment type="caution">
    <text evidence="1 2 4">The most common activity assay for dermonecrotic toxins detects enzymatic activity by monitoring choline release from substrate. Liberation of choline from sphingomyelin (SM) or lysophosphatidylcholine (LPC) is commonly assumed to result from substrate hydrolysis, giving either ceramide-1-phosphate (C1P) or lysophosphatidic acid (LPA), respectively, as a second product. However, two studies from Lajoie and colleagues (2013 and 2015) report the observation of exclusive formation of cyclic phosphate products as second products, resulting from intramolecular transphosphatidylation. Cyclic phosphates have vastly different biological properties from their monoester counterparts, and they may be relevant to the pathology of brown spider envenomation.</text>
</comment>
<sequence length="276" mass="31503">WIMGHMVNGIDQIDEFLRLGSNSPEFDINFDKDAKPVYTYHGVPCDCFRSCLRWEYIGDYLTALREVTTPGNPKFRENLSLFVFDLKTNSLYDSQAGKAGENLADDIFKYYWNEGNNGGRAYMIISIPDIEHYDLMTSFKHYFISNGHEELLDFVGFDFSANDNIPDVEKVFEKVRVPGVPDRVWQSDGITNCIMRGLNRVKEAVKVRDAGGIINKVYVWTVDKVPSIKAALDAGVDGVMTNHPDVVVGVLREDGYKDKFRYASYNDNPWETFKAE</sequence>
<accession>C0JB06</accession>
<name>A21_LOXVA</name>
<protein>
    <recommendedName>
        <fullName evidence="6">Dermonecrotic toxin LvSicTox-alphaII1</fullName>
        <ecNumber evidence="4">4.6.1.-</ecNumber>
    </recommendedName>
    <alternativeName>
        <fullName>Phospholipase D</fullName>
        <shortName>PLD</shortName>
    </alternativeName>
    <alternativeName>
        <fullName>Sphingomyelin phosphodiesterase D</fullName>
        <shortName>SMD</shortName>
        <shortName>SMase D</shortName>
        <shortName>Sphingomyelinase D</shortName>
    </alternativeName>
</protein>
<dbReference type="EC" id="4.6.1.-" evidence="4"/>
<dbReference type="EMBL" id="FJ171441">
    <property type="protein sequence ID" value="ACN48937.1"/>
    <property type="molecule type" value="mRNA"/>
</dbReference>
<dbReference type="SMR" id="C0JB06"/>
<dbReference type="GO" id="GO:0005576">
    <property type="term" value="C:extracellular region"/>
    <property type="evidence" value="ECO:0007669"/>
    <property type="project" value="UniProtKB-SubCell"/>
</dbReference>
<dbReference type="GO" id="GO:0016829">
    <property type="term" value="F:lyase activity"/>
    <property type="evidence" value="ECO:0007669"/>
    <property type="project" value="UniProtKB-KW"/>
</dbReference>
<dbReference type="GO" id="GO:0046872">
    <property type="term" value="F:metal ion binding"/>
    <property type="evidence" value="ECO:0007669"/>
    <property type="project" value="UniProtKB-KW"/>
</dbReference>
<dbReference type="GO" id="GO:0008081">
    <property type="term" value="F:phosphoric diester hydrolase activity"/>
    <property type="evidence" value="ECO:0007669"/>
    <property type="project" value="InterPro"/>
</dbReference>
<dbReference type="GO" id="GO:0090729">
    <property type="term" value="F:toxin activity"/>
    <property type="evidence" value="ECO:0007669"/>
    <property type="project" value="UniProtKB-KW"/>
</dbReference>
<dbReference type="GO" id="GO:0031640">
    <property type="term" value="P:killing of cells of another organism"/>
    <property type="evidence" value="ECO:0007669"/>
    <property type="project" value="UniProtKB-KW"/>
</dbReference>
<dbReference type="GO" id="GO:0016042">
    <property type="term" value="P:lipid catabolic process"/>
    <property type="evidence" value="ECO:0007669"/>
    <property type="project" value="UniProtKB-KW"/>
</dbReference>
<dbReference type="CDD" id="cd08576">
    <property type="entry name" value="GDPD_like_SMaseD_PLD"/>
    <property type="match status" value="1"/>
</dbReference>
<dbReference type="Gene3D" id="3.20.20.190">
    <property type="entry name" value="Phosphatidylinositol (PI) phosphodiesterase"/>
    <property type="match status" value="1"/>
</dbReference>
<dbReference type="InterPro" id="IPR017946">
    <property type="entry name" value="PLC-like_Pdiesterase_TIM-brl"/>
</dbReference>
<dbReference type="Pfam" id="PF13653">
    <property type="entry name" value="GDPD_2"/>
    <property type="match status" value="1"/>
</dbReference>
<dbReference type="SUPFAM" id="SSF51695">
    <property type="entry name" value="PLC-like phosphodiesterases"/>
    <property type="match status" value="1"/>
</dbReference>
<proteinExistence type="evidence at transcript level"/>
<organism>
    <name type="scientific">Loxosceles variegata</name>
    <name type="common">Recluse spider</name>
    <dbReference type="NCBI Taxonomy" id="571533"/>
    <lineage>
        <taxon>Eukaryota</taxon>
        <taxon>Metazoa</taxon>
        <taxon>Ecdysozoa</taxon>
        <taxon>Arthropoda</taxon>
        <taxon>Chelicerata</taxon>
        <taxon>Arachnida</taxon>
        <taxon>Araneae</taxon>
        <taxon>Araneomorphae</taxon>
        <taxon>Haplogynae</taxon>
        <taxon>Scytodoidea</taxon>
        <taxon>Sicariidae</taxon>
        <taxon>Loxosceles</taxon>
    </lineage>
</organism>